<proteinExistence type="inferred from homology"/>
<evidence type="ECO:0000255" key="1">
    <source>
        <dbReference type="HAMAP-Rule" id="MF_00696"/>
    </source>
</evidence>
<organism>
    <name type="scientific">Shewanella frigidimarina (strain NCIMB 400)</name>
    <dbReference type="NCBI Taxonomy" id="318167"/>
    <lineage>
        <taxon>Bacteria</taxon>
        <taxon>Pseudomonadati</taxon>
        <taxon>Pseudomonadota</taxon>
        <taxon>Gammaproteobacteria</taxon>
        <taxon>Alteromonadales</taxon>
        <taxon>Shewanellaceae</taxon>
        <taxon>Shewanella</taxon>
    </lineage>
</organism>
<protein>
    <recommendedName>
        <fullName evidence="1">Fatty acid metabolism regulator protein</fullName>
    </recommendedName>
</protein>
<name>FADR_SHEFN</name>
<sequence>MIINAKGPASFAEKYIVRSIWENKFPPGSILPAERELSELIGVTRTTLREVLQRLARDGWLKIQHGKPTQVNNFWETSGLNILETIADLNPDGFPLLVDQLMAARGNVSNIYFRASIRHNPEKVVEVLAGIHSLENDAEAYATFDYQLHHTLAFASGNPLYVLILNGFKGLYNRVGRYYFSSQEARELTMRFYLKLEKLAQDKNYSDVPALMRTNGIESGKMWQKLRDDLPAEMGHDKS</sequence>
<dbReference type="EMBL" id="CP000447">
    <property type="protein sequence ID" value="ABI71593.1"/>
    <property type="molecule type" value="Genomic_DNA"/>
</dbReference>
<dbReference type="RefSeq" id="WP_011637209.1">
    <property type="nucleotide sequence ID" value="NC_008345.1"/>
</dbReference>
<dbReference type="SMR" id="Q083H2"/>
<dbReference type="STRING" id="318167.Sfri_1743"/>
<dbReference type="KEGG" id="sfr:Sfri_1743"/>
<dbReference type="eggNOG" id="COG2186">
    <property type="taxonomic scope" value="Bacteria"/>
</dbReference>
<dbReference type="HOGENOM" id="CLU_017584_9_4_6"/>
<dbReference type="OrthoDB" id="5683977at2"/>
<dbReference type="Proteomes" id="UP000000684">
    <property type="component" value="Chromosome"/>
</dbReference>
<dbReference type="GO" id="GO:0005737">
    <property type="term" value="C:cytoplasm"/>
    <property type="evidence" value="ECO:0007669"/>
    <property type="project" value="UniProtKB-SubCell"/>
</dbReference>
<dbReference type="GO" id="GO:0003677">
    <property type="term" value="F:DNA binding"/>
    <property type="evidence" value="ECO:0007669"/>
    <property type="project" value="UniProtKB-KW"/>
</dbReference>
<dbReference type="GO" id="GO:0003700">
    <property type="term" value="F:DNA-binding transcription factor activity"/>
    <property type="evidence" value="ECO:0007669"/>
    <property type="project" value="UniProtKB-UniRule"/>
</dbReference>
<dbReference type="GO" id="GO:0000062">
    <property type="term" value="F:fatty-acyl-CoA binding"/>
    <property type="evidence" value="ECO:0007669"/>
    <property type="project" value="InterPro"/>
</dbReference>
<dbReference type="GO" id="GO:0006631">
    <property type="term" value="P:fatty acid metabolic process"/>
    <property type="evidence" value="ECO:0007669"/>
    <property type="project" value="UniProtKB-KW"/>
</dbReference>
<dbReference type="GO" id="GO:0019217">
    <property type="term" value="P:regulation of fatty acid metabolic process"/>
    <property type="evidence" value="ECO:0007669"/>
    <property type="project" value="UniProtKB-UniRule"/>
</dbReference>
<dbReference type="CDD" id="cd07377">
    <property type="entry name" value="WHTH_GntR"/>
    <property type="match status" value="1"/>
</dbReference>
<dbReference type="Gene3D" id="1.20.120.530">
    <property type="entry name" value="GntR ligand-binding domain-like"/>
    <property type="match status" value="1"/>
</dbReference>
<dbReference type="Gene3D" id="1.10.10.10">
    <property type="entry name" value="Winged helix-like DNA-binding domain superfamily/Winged helix DNA-binding domain"/>
    <property type="match status" value="1"/>
</dbReference>
<dbReference type="HAMAP" id="MF_00696">
    <property type="entry name" value="HTH_FadR"/>
    <property type="match status" value="1"/>
</dbReference>
<dbReference type="InterPro" id="IPR014178">
    <property type="entry name" value="FA-response_TF_FadR"/>
</dbReference>
<dbReference type="InterPro" id="IPR028374">
    <property type="entry name" value="FadR_C"/>
</dbReference>
<dbReference type="InterPro" id="IPR008920">
    <property type="entry name" value="TF_FadR/GntR_C"/>
</dbReference>
<dbReference type="InterPro" id="IPR000524">
    <property type="entry name" value="Tscrpt_reg_HTH_GntR"/>
</dbReference>
<dbReference type="InterPro" id="IPR036388">
    <property type="entry name" value="WH-like_DNA-bd_sf"/>
</dbReference>
<dbReference type="InterPro" id="IPR036390">
    <property type="entry name" value="WH_DNA-bd_sf"/>
</dbReference>
<dbReference type="NCBIfam" id="TIGR02812">
    <property type="entry name" value="fadR_gamma"/>
    <property type="match status" value="1"/>
</dbReference>
<dbReference type="NCBIfam" id="NF003444">
    <property type="entry name" value="PRK04984.1"/>
    <property type="match status" value="1"/>
</dbReference>
<dbReference type="PANTHER" id="PTHR43537:SF52">
    <property type="entry name" value="FATTY ACID METABOLISM REGULATOR PROTEIN"/>
    <property type="match status" value="1"/>
</dbReference>
<dbReference type="PANTHER" id="PTHR43537">
    <property type="entry name" value="TRANSCRIPTIONAL REGULATOR, GNTR FAMILY"/>
    <property type="match status" value="1"/>
</dbReference>
<dbReference type="Pfam" id="PF07840">
    <property type="entry name" value="FadR_C"/>
    <property type="match status" value="1"/>
</dbReference>
<dbReference type="Pfam" id="PF00392">
    <property type="entry name" value="GntR"/>
    <property type="match status" value="1"/>
</dbReference>
<dbReference type="PRINTS" id="PR00035">
    <property type="entry name" value="HTHGNTR"/>
</dbReference>
<dbReference type="SMART" id="SM00345">
    <property type="entry name" value="HTH_GNTR"/>
    <property type="match status" value="1"/>
</dbReference>
<dbReference type="SUPFAM" id="SSF48008">
    <property type="entry name" value="GntR ligand-binding domain-like"/>
    <property type="match status" value="1"/>
</dbReference>
<dbReference type="SUPFAM" id="SSF46785">
    <property type="entry name" value="Winged helix' DNA-binding domain"/>
    <property type="match status" value="1"/>
</dbReference>
<dbReference type="PROSITE" id="PS50949">
    <property type="entry name" value="HTH_GNTR"/>
    <property type="match status" value="1"/>
</dbReference>
<keyword id="KW-0010">Activator</keyword>
<keyword id="KW-0963">Cytoplasm</keyword>
<keyword id="KW-0238">DNA-binding</keyword>
<keyword id="KW-0276">Fatty acid metabolism</keyword>
<keyword id="KW-0443">Lipid metabolism</keyword>
<keyword id="KW-1185">Reference proteome</keyword>
<keyword id="KW-0678">Repressor</keyword>
<keyword id="KW-0804">Transcription</keyword>
<keyword id="KW-0805">Transcription regulation</keyword>
<feature type="chain" id="PRO_0000301510" description="Fatty acid metabolism regulator protein">
    <location>
        <begin position="1"/>
        <end position="239"/>
    </location>
</feature>
<feature type="domain" description="HTH gntR-type" evidence="1">
    <location>
        <begin position="6"/>
        <end position="74"/>
    </location>
</feature>
<feature type="DNA-binding region" description="H-T-H motif" evidence="1">
    <location>
        <begin position="34"/>
        <end position="53"/>
    </location>
</feature>
<accession>Q083H2</accession>
<comment type="function">
    <text evidence="1">Multifunctional regulator of fatty acid metabolism.</text>
</comment>
<comment type="subunit">
    <text evidence="1">Homodimer.</text>
</comment>
<comment type="subcellular location">
    <subcellularLocation>
        <location evidence="1">Cytoplasm</location>
    </subcellularLocation>
</comment>
<reference key="1">
    <citation type="submission" date="2006-08" db="EMBL/GenBank/DDBJ databases">
        <title>Complete sequence of Shewanella frigidimarina NCIMB 400.</title>
        <authorList>
            <consortium name="US DOE Joint Genome Institute"/>
            <person name="Copeland A."/>
            <person name="Lucas S."/>
            <person name="Lapidus A."/>
            <person name="Barry K."/>
            <person name="Detter J.C."/>
            <person name="Glavina del Rio T."/>
            <person name="Hammon N."/>
            <person name="Israni S."/>
            <person name="Dalin E."/>
            <person name="Tice H."/>
            <person name="Pitluck S."/>
            <person name="Fredrickson J.K."/>
            <person name="Kolker E."/>
            <person name="McCuel L.A."/>
            <person name="DiChristina T."/>
            <person name="Nealson K.H."/>
            <person name="Newman D."/>
            <person name="Tiedje J.M."/>
            <person name="Zhou J."/>
            <person name="Romine M.F."/>
            <person name="Culley D.E."/>
            <person name="Serres M."/>
            <person name="Chertkov O."/>
            <person name="Brettin T."/>
            <person name="Bruce D."/>
            <person name="Han C."/>
            <person name="Tapia R."/>
            <person name="Gilna P."/>
            <person name="Schmutz J."/>
            <person name="Larimer F."/>
            <person name="Land M."/>
            <person name="Hauser L."/>
            <person name="Kyrpides N."/>
            <person name="Mikhailova N."/>
            <person name="Richardson P."/>
        </authorList>
    </citation>
    <scope>NUCLEOTIDE SEQUENCE [LARGE SCALE GENOMIC DNA]</scope>
    <source>
        <strain>NCIMB 400</strain>
    </source>
</reference>
<gene>
    <name evidence="1" type="primary">fadR</name>
    <name type="ordered locus">Sfri_1743</name>
</gene>